<reference key="1">
    <citation type="journal article" date="1992" name="J. Mol. Biol.">
        <title>Gene organization deduced from the complete sequence of liverwort Marchantia polymorpha mitochondrial DNA. A primitive form of plant mitochondrial genome.</title>
        <authorList>
            <person name="Oda K."/>
            <person name="Yamato K."/>
            <person name="Ohta E."/>
            <person name="Nakamura Y."/>
            <person name="Takemura M."/>
            <person name="Nozato N."/>
            <person name="Akashi K."/>
            <person name="Kanegae T."/>
            <person name="Ogura Y."/>
            <person name="Kohchi T."/>
            <person name="Ohyama K."/>
        </authorList>
    </citation>
    <scope>NUCLEOTIDE SEQUENCE [GENOMIC DNA]</scope>
</reference>
<sequence>MGYGCRNKYTGVHLAGSCKQIKTYQVGIQRNIIWVITSFFLISSSFSRNGSLNSSAYFIFLFFNIVTKFIKIESCFLFYAVRKVAN</sequence>
<feature type="chain" id="PRO_0000196835" description="Uncharacterized mitochondrial protein ymf7">
    <location>
        <begin position="1"/>
        <end position="86"/>
    </location>
</feature>
<protein>
    <recommendedName>
        <fullName>Uncharacterized mitochondrial protein ymf7</fullName>
    </recommendedName>
    <alternativeName>
        <fullName>ORF86B</fullName>
    </alternativeName>
</protein>
<dbReference type="EMBL" id="M68929">
    <property type="protein sequence ID" value="AAC09447.1"/>
    <property type="molecule type" value="Genomic_DNA"/>
</dbReference>
<dbReference type="PIR" id="S25998">
    <property type="entry name" value="S25998"/>
</dbReference>
<dbReference type="GO" id="GO:0005739">
    <property type="term" value="C:mitochondrion"/>
    <property type="evidence" value="ECO:0007669"/>
    <property type="project" value="UniProtKB-SubCell"/>
</dbReference>
<comment type="subcellular location">
    <subcellularLocation>
        <location evidence="1">Mitochondrion</location>
    </subcellularLocation>
</comment>
<name>YMF07_MARPO</name>
<proteinExistence type="predicted"/>
<gene>
    <name type="primary">YMF7</name>
</gene>
<organism>
    <name type="scientific">Marchantia polymorpha</name>
    <name type="common">Common liverwort</name>
    <name type="synonym">Marchantia aquatica</name>
    <dbReference type="NCBI Taxonomy" id="3197"/>
    <lineage>
        <taxon>Eukaryota</taxon>
        <taxon>Viridiplantae</taxon>
        <taxon>Streptophyta</taxon>
        <taxon>Embryophyta</taxon>
        <taxon>Marchantiophyta</taxon>
        <taxon>Marchantiopsida</taxon>
        <taxon>Marchantiidae</taxon>
        <taxon>Marchantiales</taxon>
        <taxon>Marchantiaceae</taxon>
        <taxon>Marchantia</taxon>
    </lineage>
</organism>
<geneLocation type="mitochondrion"/>
<accession>P38455</accession>
<keyword id="KW-0496">Mitochondrion</keyword>
<evidence type="ECO:0000305" key="1"/>